<evidence type="ECO:0000255" key="1">
    <source>
        <dbReference type="HAMAP-Rule" id="MF_01855"/>
    </source>
</evidence>
<accession>A6VDM7</accession>
<feature type="chain" id="PRO_0000364641" description="Fructose-1,6-bisphosphatase class 1">
    <location>
        <begin position="1"/>
        <end position="336"/>
    </location>
</feature>
<feature type="binding site" evidence="1">
    <location>
        <position position="90"/>
    </location>
    <ligand>
        <name>Mg(2+)</name>
        <dbReference type="ChEBI" id="CHEBI:18420"/>
        <label>1</label>
    </ligand>
</feature>
<feature type="binding site" evidence="1">
    <location>
        <position position="112"/>
    </location>
    <ligand>
        <name>Mg(2+)</name>
        <dbReference type="ChEBI" id="CHEBI:18420"/>
        <label>1</label>
    </ligand>
</feature>
<feature type="binding site" evidence="1">
    <location>
        <position position="112"/>
    </location>
    <ligand>
        <name>Mg(2+)</name>
        <dbReference type="ChEBI" id="CHEBI:18420"/>
        <label>2</label>
    </ligand>
</feature>
<feature type="binding site" evidence="1">
    <location>
        <position position="114"/>
    </location>
    <ligand>
        <name>Mg(2+)</name>
        <dbReference type="ChEBI" id="CHEBI:18420"/>
        <label>1</label>
    </ligand>
</feature>
<feature type="binding site" evidence="1">
    <location>
        <begin position="115"/>
        <end position="118"/>
    </location>
    <ligand>
        <name>substrate</name>
    </ligand>
</feature>
<feature type="binding site" evidence="1">
    <location>
        <position position="115"/>
    </location>
    <ligand>
        <name>Mg(2+)</name>
        <dbReference type="ChEBI" id="CHEBI:18420"/>
        <label>2</label>
    </ligand>
</feature>
<feature type="binding site" evidence="1">
    <location>
        <position position="211"/>
    </location>
    <ligand>
        <name>substrate</name>
    </ligand>
</feature>
<feature type="binding site" evidence="1">
    <location>
        <position position="277"/>
    </location>
    <ligand>
        <name>substrate</name>
    </ligand>
</feature>
<feature type="binding site" evidence="1">
    <location>
        <position position="283"/>
    </location>
    <ligand>
        <name>Mg(2+)</name>
        <dbReference type="ChEBI" id="CHEBI:18420"/>
        <label>2</label>
    </ligand>
</feature>
<name>F16PA_PSEP7</name>
<dbReference type="EC" id="3.1.3.11" evidence="1"/>
<dbReference type="EMBL" id="CP000744">
    <property type="protein sequence ID" value="ABR85949.1"/>
    <property type="molecule type" value="Genomic_DNA"/>
</dbReference>
<dbReference type="RefSeq" id="WP_012077766.1">
    <property type="nucleotide sequence ID" value="NC_009656.1"/>
</dbReference>
<dbReference type="SMR" id="A6VDM7"/>
<dbReference type="GeneID" id="77223639"/>
<dbReference type="KEGG" id="pap:PSPA7_5843"/>
<dbReference type="HOGENOM" id="CLU_039977_0_0_6"/>
<dbReference type="UniPathway" id="UPA00138"/>
<dbReference type="Proteomes" id="UP000001582">
    <property type="component" value="Chromosome"/>
</dbReference>
<dbReference type="GO" id="GO:0005829">
    <property type="term" value="C:cytosol"/>
    <property type="evidence" value="ECO:0007669"/>
    <property type="project" value="TreeGrafter"/>
</dbReference>
<dbReference type="GO" id="GO:0042132">
    <property type="term" value="F:fructose 1,6-bisphosphate 1-phosphatase activity"/>
    <property type="evidence" value="ECO:0007669"/>
    <property type="project" value="UniProtKB-UniRule"/>
</dbReference>
<dbReference type="GO" id="GO:0000287">
    <property type="term" value="F:magnesium ion binding"/>
    <property type="evidence" value="ECO:0007669"/>
    <property type="project" value="UniProtKB-UniRule"/>
</dbReference>
<dbReference type="GO" id="GO:0030388">
    <property type="term" value="P:fructose 1,6-bisphosphate metabolic process"/>
    <property type="evidence" value="ECO:0007669"/>
    <property type="project" value="TreeGrafter"/>
</dbReference>
<dbReference type="GO" id="GO:0006002">
    <property type="term" value="P:fructose 6-phosphate metabolic process"/>
    <property type="evidence" value="ECO:0007669"/>
    <property type="project" value="TreeGrafter"/>
</dbReference>
<dbReference type="GO" id="GO:0006000">
    <property type="term" value="P:fructose metabolic process"/>
    <property type="evidence" value="ECO:0007669"/>
    <property type="project" value="TreeGrafter"/>
</dbReference>
<dbReference type="GO" id="GO:0006094">
    <property type="term" value="P:gluconeogenesis"/>
    <property type="evidence" value="ECO:0007669"/>
    <property type="project" value="UniProtKB-UniRule"/>
</dbReference>
<dbReference type="GO" id="GO:0005986">
    <property type="term" value="P:sucrose biosynthetic process"/>
    <property type="evidence" value="ECO:0007669"/>
    <property type="project" value="TreeGrafter"/>
</dbReference>
<dbReference type="CDD" id="cd00354">
    <property type="entry name" value="FBPase"/>
    <property type="match status" value="1"/>
</dbReference>
<dbReference type="FunFam" id="3.30.540.10:FF:000006">
    <property type="entry name" value="Fructose-1,6-bisphosphatase class 1"/>
    <property type="match status" value="1"/>
</dbReference>
<dbReference type="FunFam" id="3.40.190.80:FF:000011">
    <property type="entry name" value="Fructose-1,6-bisphosphatase class 1"/>
    <property type="match status" value="1"/>
</dbReference>
<dbReference type="Gene3D" id="3.40.190.80">
    <property type="match status" value="1"/>
</dbReference>
<dbReference type="Gene3D" id="3.30.540.10">
    <property type="entry name" value="Fructose-1,6-Bisphosphatase, subunit A, domain 1"/>
    <property type="match status" value="1"/>
</dbReference>
<dbReference type="HAMAP" id="MF_01855">
    <property type="entry name" value="FBPase_class1"/>
    <property type="match status" value="1"/>
</dbReference>
<dbReference type="InterPro" id="IPR044015">
    <property type="entry name" value="FBPase_C_dom"/>
</dbReference>
<dbReference type="InterPro" id="IPR000146">
    <property type="entry name" value="FBPase_class-1"/>
</dbReference>
<dbReference type="InterPro" id="IPR033391">
    <property type="entry name" value="FBPase_N"/>
</dbReference>
<dbReference type="InterPro" id="IPR028343">
    <property type="entry name" value="FBPtase"/>
</dbReference>
<dbReference type="NCBIfam" id="NF006778">
    <property type="entry name" value="PRK09293.1-1"/>
    <property type="match status" value="1"/>
</dbReference>
<dbReference type="NCBIfam" id="NF006779">
    <property type="entry name" value="PRK09293.1-3"/>
    <property type="match status" value="1"/>
</dbReference>
<dbReference type="NCBIfam" id="NF006780">
    <property type="entry name" value="PRK09293.1-4"/>
    <property type="match status" value="1"/>
</dbReference>
<dbReference type="PANTHER" id="PTHR11556">
    <property type="entry name" value="FRUCTOSE-1,6-BISPHOSPHATASE-RELATED"/>
    <property type="match status" value="1"/>
</dbReference>
<dbReference type="PANTHER" id="PTHR11556:SF35">
    <property type="entry name" value="SEDOHEPTULOSE-1,7-BISPHOSPHATASE, CHLOROPLASTIC"/>
    <property type="match status" value="1"/>
</dbReference>
<dbReference type="Pfam" id="PF00316">
    <property type="entry name" value="FBPase"/>
    <property type="match status" value="1"/>
</dbReference>
<dbReference type="Pfam" id="PF18913">
    <property type="entry name" value="FBPase_C"/>
    <property type="match status" value="1"/>
</dbReference>
<dbReference type="PIRSF" id="PIRSF500210">
    <property type="entry name" value="FBPtase"/>
    <property type="match status" value="1"/>
</dbReference>
<dbReference type="PIRSF" id="PIRSF000904">
    <property type="entry name" value="FBPtase_SBPase"/>
    <property type="match status" value="1"/>
</dbReference>
<dbReference type="PRINTS" id="PR00115">
    <property type="entry name" value="F16BPHPHTASE"/>
</dbReference>
<dbReference type="SUPFAM" id="SSF56655">
    <property type="entry name" value="Carbohydrate phosphatase"/>
    <property type="match status" value="1"/>
</dbReference>
<comment type="catalytic activity">
    <reaction evidence="1">
        <text>beta-D-fructose 1,6-bisphosphate + H2O = beta-D-fructose 6-phosphate + phosphate</text>
        <dbReference type="Rhea" id="RHEA:11064"/>
        <dbReference type="ChEBI" id="CHEBI:15377"/>
        <dbReference type="ChEBI" id="CHEBI:32966"/>
        <dbReference type="ChEBI" id="CHEBI:43474"/>
        <dbReference type="ChEBI" id="CHEBI:57634"/>
        <dbReference type="EC" id="3.1.3.11"/>
    </reaction>
</comment>
<comment type="cofactor">
    <cofactor evidence="1">
        <name>Mg(2+)</name>
        <dbReference type="ChEBI" id="CHEBI:18420"/>
    </cofactor>
    <text evidence="1">Binds 2 magnesium ions per subunit.</text>
</comment>
<comment type="pathway">
    <text evidence="1">Carbohydrate biosynthesis; gluconeogenesis.</text>
</comment>
<comment type="subunit">
    <text evidence="1">Homotetramer.</text>
</comment>
<comment type="subcellular location">
    <subcellularLocation>
        <location evidence="1">Cytoplasm</location>
    </subcellularLocation>
</comment>
<comment type="similarity">
    <text evidence="1">Belongs to the FBPase class 1 family.</text>
</comment>
<gene>
    <name evidence="1" type="primary">fbp</name>
    <name type="ordered locus">PSPA7_5843</name>
</gene>
<sequence length="336" mass="37273">MSRVTLSRYLIEQTRSHNTPADLRFLIEVVARACKEISHAVSKGALGGVLGSMGTENVQGEVQKKLDVMSNEILLEANEWAGNLAGMASEEMDHPYQIPGRYPKGAYLLVFDPLDGSSNIDVNVSVGTIFSVLRCPNEYLNQNDTLREEAFLQPGTTQVAAGYAIYGPQTMLMLTLGNGVKGFTLDRELGSFVLTHDNISVPESTAEFAINMSNQRHWEAPVKRYVEELLAGKEGPLGKNYNMRWIASMVADVHRILTRGGVFMYPRDAREPEKPGKLRLMYEANPMSFIIEQAGGAATNGTQRILDIKPENLHQRVAVFLGSKQEVERITGYHKE</sequence>
<organism>
    <name type="scientific">Pseudomonas paraeruginosa (strain DSM 24068 / PA7)</name>
    <name type="common">Pseudomonas aeruginosa (strain PA7)</name>
    <dbReference type="NCBI Taxonomy" id="381754"/>
    <lineage>
        <taxon>Bacteria</taxon>
        <taxon>Pseudomonadati</taxon>
        <taxon>Pseudomonadota</taxon>
        <taxon>Gammaproteobacteria</taxon>
        <taxon>Pseudomonadales</taxon>
        <taxon>Pseudomonadaceae</taxon>
        <taxon>Pseudomonas</taxon>
        <taxon>Pseudomonas paraeruginosa</taxon>
    </lineage>
</organism>
<reference key="1">
    <citation type="submission" date="2007-06" db="EMBL/GenBank/DDBJ databases">
        <authorList>
            <person name="Dodson R.J."/>
            <person name="Harkins D."/>
            <person name="Paulsen I.T."/>
        </authorList>
    </citation>
    <scope>NUCLEOTIDE SEQUENCE [LARGE SCALE GENOMIC DNA]</scope>
    <source>
        <strain>DSM 24068 / PA7</strain>
    </source>
</reference>
<proteinExistence type="inferred from homology"/>
<keyword id="KW-0119">Carbohydrate metabolism</keyword>
<keyword id="KW-0963">Cytoplasm</keyword>
<keyword id="KW-0378">Hydrolase</keyword>
<keyword id="KW-0460">Magnesium</keyword>
<keyword id="KW-0479">Metal-binding</keyword>
<protein>
    <recommendedName>
        <fullName evidence="1">Fructose-1,6-bisphosphatase class 1</fullName>
        <shortName evidence="1">FBPase class 1</shortName>
        <ecNumber evidence="1">3.1.3.11</ecNumber>
    </recommendedName>
    <alternativeName>
        <fullName evidence="1">D-fructose-1,6-bisphosphate 1-phosphohydrolase class 1</fullName>
    </alternativeName>
</protein>